<evidence type="ECO:0000255" key="1">
    <source>
        <dbReference type="HAMAP-Rule" id="MF_01526"/>
    </source>
</evidence>
<feature type="chain" id="PRO_1000068660" description="UPF0342 protein SAHV_1830">
    <location>
        <begin position="1"/>
        <end position="114"/>
    </location>
</feature>
<proteinExistence type="inferred from homology"/>
<name>Y1830_STAA1</name>
<sequence>MAVNLYDYANQLEQALRESEEYKAIKEAFANVKANEESKKLFDEFRETQINFQQKQMQGEEIAEEDLQKAQEQAQAIEKDENISALMNAEQKMSQVFQEINQIIVKPLDEIYAD</sequence>
<gene>
    <name type="ordered locus">SAHV_1830</name>
</gene>
<comment type="similarity">
    <text evidence="1">Belongs to the UPF0342 family.</text>
</comment>
<accession>A7X3V3</accession>
<reference key="1">
    <citation type="journal article" date="2008" name="Antimicrob. Agents Chemother.">
        <title>Mutated response regulator graR is responsible for phenotypic conversion of Staphylococcus aureus from heterogeneous vancomycin-intermediate resistance to vancomycin-intermediate resistance.</title>
        <authorList>
            <person name="Neoh H.-M."/>
            <person name="Cui L."/>
            <person name="Yuzawa H."/>
            <person name="Takeuchi F."/>
            <person name="Matsuo M."/>
            <person name="Hiramatsu K."/>
        </authorList>
    </citation>
    <scope>NUCLEOTIDE SEQUENCE [LARGE SCALE GENOMIC DNA]</scope>
    <source>
        <strain>Mu3 / ATCC 700698</strain>
    </source>
</reference>
<dbReference type="EMBL" id="AP009324">
    <property type="protein sequence ID" value="BAF78713.1"/>
    <property type="molecule type" value="Genomic_DNA"/>
</dbReference>
<dbReference type="RefSeq" id="WP_000290301.1">
    <property type="nucleotide sequence ID" value="NZ_CTYB01000031.1"/>
</dbReference>
<dbReference type="SMR" id="A7X3V3"/>
<dbReference type="KEGG" id="saw:SAHV_1830"/>
<dbReference type="HOGENOM" id="CLU_140243_3_0_9"/>
<dbReference type="Gene3D" id="1.20.1500.10">
    <property type="entry name" value="YheA/YmcA-like"/>
    <property type="match status" value="1"/>
</dbReference>
<dbReference type="HAMAP" id="MF_01526">
    <property type="entry name" value="UPF0342"/>
    <property type="match status" value="1"/>
</dbReference>
<dbReference type="InterPro" id="IPR010368">
    <property type="entry name" value="Com_YlbF"/>
</dbReference>
<dbReference type="InterPro" id="IPR023378">
    <property type="entry name" value="YheA/YmcA-like_dom_sf"/>
</dbReference>
<dbReference type="NCBIfam" id="NF010212">
    <property type="entry name" value="PRK13676.1-5"/>
    <property type="match status" value="1"/>
</dbReference>
<dbReference type="Pfam" id="PF06133">
    <property type="entry name" value="Com_YlbF"/>
    <property type="match status" value="1"/>
</dbReference>
<dbReference type="SUPFAM" id="SSF158622">
    <property type="entry name" value="YheA/YmcA-like"/>
    <property type="match status" value="1"/>
</dbReference>
<protein>
    <recommendedName>
        <fullName evidence="1">UPF0342 protein SAHV_1830</fullName>
    </recommendedName>
</protein>
<organism>
    <name type="scientific">Staphylococcus aureus (strain Mu3 / ATCC 700698)</name>
    <dbReference type="NCBI Taxonomy" id="418127"/>
    <lineage>
        <taxon>Bacteria</taxon>
        <taxon>Bacillati</taxon>
        <taxon>Bacillota</taxon>
        <taxon>Bacilli</taxon>
        <taxon>Bacillales</taxon>
        <taxon>Staphylococcaceae</taxon>
        <taxon>Staphylococcus</taxon>
    </lineage>
</organism>